<evidence type="ECO:0000255" key="1">
    <source>
        <dbReference type="HAMAP-Rule" id="MF_00692"/>
    </source>
</evidence>
<accession>B6EIM5</accession>
<feature type="chain" id="PRO_1000132082" description="Protein nucleotidyltransferase YdiU">
    <location>
        <begin position="1"/>
        <end position="485"/>
    </location>
</feature>
<feature type="active site" description="Proton acceptor" evidence="1">
    <location>
        <position position="252"/>
    </location>
</feature>
<feature type="binding site" evidence="1">
    <location>
        <position position="90"/>
    </location>
    <ligand>
        <name>ATP</name>
        <dbReference type="ChEBI" id="CHEBI:30616"/>
    </ligand>
</feature>
<feature type="binding site" evidence="1">
    <location>
        <position position="92"/>
    </location>
    <ligand>
        <name>ATP</name>
        <dbReference type="ChEBI" id="CHEBI:30616"/>
    </ligand>
</feature>
<feature type="binding site" evidence="1">
    <location>
        <position position="93"/>
    </location>
    <ligand>
        <name>ATP</name>
        <dbReference type="ChEBI" id="CHEBI:30616"/>
    </ligand>
</feature>
<feature type="binding site" evidence="1">
    <location>
        <position position="113"/>
    </location>
    <ligand>
        <name>ATP</name>
        <dbReference type="ChEBI" id="CHEBI:30616"/>
    </ligand>
</feature>
<feature type="binding site" evidence="1">
    <location>
        <position position="125"/>
    </location>
    <ligand>
        <name>ATP</name>
        <dbReference type="ChEBI" id="CHEBI:30616"/>
    </ligand>
</feature>
<feature type="binding site" evidence="1">
    <location>
        <position position="126"/>
    </location>
    <ligand>
        <name>ATP</name>
        <dbReference type="ChEBI" id="CHEBI:30616"/>
    </ligand>
</feature>
<feature type="binding site" evidence="1">
    <location>
        <position position="176"/>
    </location>
    <ligand>
        <name>ATP</name>
        <dbReference type="ChEBI" id="CHEBI:30616"/>
    </ligand>
</feature>
<feature type="binding site" evidence="1">
    <location>
        <position position="183"/>
    </location>
    <ligand>
        <name>ATP</name>
        <dbReference type="ChEBI" id="CHEBI:30616"/>
    </ligand>
</feature>
<feature type="binding site" evidence="1">
    <location>
        <position position="253"/>
    </location>
    <ligand>
        <name>Mg(2+)</name>
        <dbReference type="ChEBI" id="CHEBI:18420"/>
    </ligand>
</feature>
<feature type="binding site" evidence="1">
    <location>
        <position position="262"/>
    </location>
    <ligand>
        <name>ATP</name>
        <dbReference type="ChEBI" id="CHEBI:30616"/>
    </ligand>
</feature>
<feature type="binding site" evidence="1">
    <location>
        <position position="262"/>
    </location>
    <ligand>
        <name>Mg(2+)</name>
        <dbReference type="ChEBI" id="CHEBI:18420"/>
    </ligand>
</feature>
<gene>
    <name evidence="1" type="primary">ydiU</name>
    <name evidence="1" type="synonym">selO</name>
    <name type="ordered locus">VSAL_I2210</name>
</gene>
<comment type="function">
    <text evidence="1">Nucleotidyltransferase involved in the post-translational modification of proteins. It can catalyze the addition of adenosine monophosphate (AMP) or uridine monophosphate (UMP) to a protein, resulting in modifications known as AMPylation and UMPylation.</text>
</comment>
<comment type="catalytic activity">
    <reaction evidence="1">
        <text>L-seryl-[protein] + ATP = 3-O-(5'-adenylyl)-L-seryl-[protein] + diphosphate</text>
        <dbReference type="Rhea" id="RHEA:58120"/>
        <dbReference type="Rhea" id="RHEA-COMP:9863"/>
        <dbReference type="Rhea" id="RHEA-COMP:15073"/>
        <dbReference type="ChEBI" id="CHEBI:29999"/>
        <dbReference type="ChEBI" id="CHEBI:30616"/>
        <dbReference type="ChEBI" id="CHEBI:33019"/>
        <dbReference type="ChEBI" id="CHEBI:142516"/>
        <dbReference type="EC" id="2.7.7.108"/>
    </reaction>
</comment>
<comment type="catalytic activity">
    <reaction evidence="1">
        <text>L-threonyl-[protein] + ATP = 3-O-(5'-adenylyl)-L-threonyl-[protein] + diphosphate</text>
        <dbReference type="Rhea" id="RHEA:54292"/>
        <dbReference type="Rhea" id="RHEA-COMP:11060"/>
        <dbReference type="Rhea" id="RHEA-COMP:13847"/>
        <dbReference type="ChEBI" id="CHEBI:30013"/>
        <dbReference type="ChEBI" id="CHEBI:30616"/>
        <dbReference type="ChEBI" id="CHEBI:33019"/>
        <dbReference type="ChEBI" id="CHEBI:138113"/>
        <dbReference type="EC" id="2.7.7.108"/>
    </reaction>
</comment>
<comment type="catalytic activity">
    <reaction evidence="1">
        <text>L-tyrosyl-[protein] + ATP = O-(5'-adenylyl)-L-tyrosyl-[protein] + diphosphate</text>
        <dbReference type="Rhea" id="RHEA:54288"/>
        <dbReference type="Rhea" id="RHEA-COMP:10136"/>
        <dbReference type="Rhea" id="RHEA-COMP:13846"/>
        <dbReference type="ChEBI" id="CHEBI:30616"/>
        <dbReference type="ChEBI" id="CHEBI:33019"/>
        <dbReference type="ChEBI" id="CHEBI:46858"/>
        <dbReference type="ChEBI" id="CHEBI:83624"/>
        <dbReference type="EC" id="2.7.7.108"/>
    </reaction>
</comment>
<comment type="catalytic activity">
    <reaction evidence="1">
        <text>L-histidyl-[protein] + UTP = N(tele)-(5'-uridylyl)-L-histidyl-[protein] + diphosphate</text>
        <dbReference type="Rhea" id="RHEA:83891"/>
        <dbReference type="Rhea" id="RHEA-COMP:9745"/>
        <dbReference type="Rhea" id="RHEA-COMP:20239"/>
        <dbReference type="ChEBI" id="CHEBI:29979"/>
        <dbReference type="ChEBI" id="CHEBI:33019"/>
        <dbReference type="ChEBI" id="CHEBI:46398"/>
        <dbReference type="ChEBI" id="CHEBI:233474"/>
    </reaction>
</comment>
<comment type="catalytic activity">
    <reaction evidence="1">
        <text>L-seryl-[protein] + UTP = O-(5'-uridylyl)-L-seryl-[protein] + diphosphate</text>
        <dbReference type="Rhea" id="RHEA:64604"/>
        <dbReference type="Rhea" id="RHEA-COMP:9863"/>
        <dbReference type="Rhea" id="RHEA-COMP:16635"/>
        <dbReference type="ChEBI" id="CHEBI:29999"/>
        <dbReference type="ChEBI" id="CHEBI:33019"/>
        <dbReference type="ChEBI" id="CHEBI:46398"/>
        <dbReference type="ChEBI" id="CHEBI:156051"/>
    </reaction>
</comment>
<comment type="catalytic activity">
    <reaction evidence="1">
        <text>L-tyrosyl-[protein] + UTP = O-(5'-uridylyl)-L-tyrosyl-[protein] + diphosphate</text>
        <dbReference type="Rhea" id="RHEA:83887"/>
        <dbReference type="Rhea" id="RHEA-COMP:10136"/>
        <dbReference type="Rhea" id="RHEA-COMP:20238"/>
        <dbReference type="ChEBI" id="CHEBI:33019"/>
        <dbReference type="ChEBI" id="CHEBI:46398"/>
        <dbReference type="ChEBI" id="CHEBI:46858"/>
        <dbReference type="ChEBI" id="CHEBI:90602"/>
    </reaction>
</comment>
<comment type="cofactor">
    <cofactor evidence="1">
        <name>Mg(2+)</name>
        <dbReference type="ChEBI" id="CHEBI:18420"/>
    </cofactor>
    <cofactor evidence="1">
        <name>Mn(2+)</name>
        <dbReference type="ChEBI" id="CHEBI:29035"/>
    </cofactor>
</comment>
<comment type="similarity">
    <text evidence="1">Belongs to the SELO family.</text>
</comment>
<reference key="1">
    <citation type="journal article" date="2008" name="BMC Genomics">
        <title>The genome sequence of the fish pathogen Aliivibrio salmonicida strain LFI1238 shows extensive evidence of gene decay.</title>
        <authorList>
            <person name="Hjerde E."/>
            <person name="Lorentzen M.S."/>
            <person name="Holden M.T."/>
            <person name="Seeger K."/>
            <person name="Paulsen S."/>
            <person name="Bason N."/>
            <person name="Churcher C."/>
            <person name="Harris D."/>
            <person name="Norbertczak H."/>
            <person name="Quail M.A."/>
            <person name="Sanders S."/>
            <person name="Thurston S."/>
            <person name="Parkhill J."/>
            <person name="Willassen N.P."/>
            <person name="Thomson N.R."/>
        </authorList>
    </citation>
    <scope>NUCLEOTIDE SEQUENCE [LARGE SCALE GENOMIC DNA]</scope>
    <source>
        <strain>LFI1238</strain>
    </source>
</reference>
<keyword id="KW-0067">ATP-binding</keyword>
<keyword id="KW-0460">Magnesium</keyword>
<keyword id="KW-0464">Manganese</keyword>
<keyword id="KW-0479">Metal-binding</keyword>
<keyword id="KW-0547">Nucleotide-binding</keyword>
<keyword id="KW-0548">Nucleotidyltransferase</keyword>
<keyword id="KW-0808">Transferase</keyword>
<proteinExistence type="inferred from homology"/>
<sequence>MSIWNSLSLSTRYSELPPLLFTHVPPQPLNNVHWIMWNEKLAKRFNLPLDPAADAELLSGFSGEVVPPQFSPLAMKYAGHQFGSYNPDLGDGRGLLLAEIKDKAGASFDIHLKGAGRTPYSRSGDGRAVLRSTIREYLCSEAMFGLGIPTTRALGMMGSDTPVYREGYETGALLLRVAETHVRFGHFEHLFYSNLLAEHKLLADKVIEWHFPDCLDNENPYAVMFNEIVDRTAKMIAHWQAVGFAHGVMNTDNMSIIGQTFDYGPFGFLDDYEPGYICNHSDYQGRYAFNQQPRIGLWNLSALAHALSPLIDKADLDQALEQYEVQLHGYFSQLMRQKLGLITKQDGDSRLFESMFELLSQNSVDYTRFLRELSNVDTHNEQAIIDLFIDRDAAKLWVSLYITRCEKEHETVASRCKKMREVNPKYILRNYLAQQAIDKAQEGDYSELEALSLLLRSPFDEHIEFEHYANLPPSWGKKMEISCSS</sequence>
<dbReference type="EC" id="2.7.7.-" evidence="1"/>
<dbReference type="EC" id="2.7.7.108" evidence="1"/>
<dbReference type="EMBL" id="FM178379">
    <property type="protein sequence ID" value="CAQ79895.1"/>
    <property type="molecule type" value="Genomic_DNA"/>
</dbReference>
<dbReference type="RefSeq" id="WP_012550726.1">
    <property type="nucleotide sequence ID" value="NC_011312.1"/>
</dbReference>
<dbReference type="SMR" id="B6EIM5"/>
<dbReference type="KEGG" id="vsa:VSAL_I2210"/>
<dbReference type="eggNOG" id="COG0397">
    <property type="taxonomic scope" value="Bacteria"/>
</dbReference>
<dbReference type="HOGENOM" id="CLU_010245_4_0_6"/>
<dbReference type="Proteomes" id="UP000001730">
    <property type="component" value="Chromosome 1"/>
</dbReference>
<dbReference type="GO" id="GO:0070733">
    <property type="term" value="F:AMPylase activity"/>
    <property type="evidence" value="ECO:0007669"/>
    <property type="project" value="TreeGrafter"/>
</dbReference>
<dbReference type="GO" id="GO:0005524">
    <property type="term" value="F:ATP binding"/>
    <property type="evidence" value="ECO:0007669"/>
    <property type="project" value="UniProtKB-UniRule"/>
</dbReference>
<dbReference type="GO" id="GO:0000287">
    <property type="term" value="F:magnesium ion binding"/>
    <property type="evidence" value="ECO:0007669"/>
    <property type="project" value="UniProtKB-UniRule"/>
</dbReference>
<dbReference type="HAMAP" id="MF_00692">
    <property type="entry name" value="YdiU_SelO"/>
    <property type="match status" value="1"/>
</dbReference>
<dbReference type="InterPro" id="IPR003846">
    <property type="entry name" value="SelO"/>
</dbReference>
<dbReference type="NCBIfam" id="NF000658">
    <property type="entry name" value="PRK00029.1"/>
    <property type="match status" value="1"/>
</dbReference>
<dbReference type="PANTHER" id="PTHR32057">
    <property type="entry name" value="PROTEIN ADENYLYLTRANSFERASE SELO, MITOCHONDRIAL"/>
    <property type="match status" value="1"/>
</dbReference>
<dbReference type="PANTHER" id="PTHR32057:SF14">
    <property type="entry name" value="PROTEIN ADENYLYLTRANSFERASE SELO, MITOCHONDRIAL"/>
    <property type="match status" value="1"/>
</dbReference>
<dbReference type="Pfam" id="PF02696">
    <property type="entry name" value="SelO"/>
    <property type="match status" value="1"/>
</dbReference>
<name>SELO_ALISL</name>
<protein>
    <recommendedName>
        <fullName evidence="1">Protein nucleotidyltransferase YdiU</fullName>
        <ecNumber evidence="1">2.7.7.-</ecNumber>
    </recommendedName>
    <alternativeName>
        <fullName evidence="1">Protein adenylyltransferase YdiU</fullName>
        <ecNumber evidence="1">2.7.7.108</ecNumber>
    </alternativeName>
    <alternativeName>
        <fullName evidence="1">Protein uridylyltransferase YdiU</fullName>
        <ecNumber evidence="1">2.7.7.-</ecNumber>
    </alternativeName>
</protein>
<organism>
    <name type="scientific">Aliivibrio salmonicida (strain LFI1238)</name>
    <name type="common">Vibrio salmonicida (strain LFI1238)</name>
    <dbReference type="NCBI Taxonomy" id="316275"/>
    <lineage>
        <taxon>Bacteria</taxon>
        <taxon>Pseudomonadati</taxon>
        <taxon>Pseudomonadota</taxon>
        <taxon>Gammaproteobacteria</taxon>
        <taxon>Vibrionales</taxon>
        <taxon>Vibrionaceae</taxon>
        <taxon>Aliivibrio</taxon>
    </lineage>
</organism>